<sequence>MWKLKIGKGNGEDPHLFSSNNFVGRQTWKFDHKAGSPEERAAVEEARRGFLDNRFRVKGCSDLLWRMQFLREKKFEQGIPQLKATNIEEITYETTTNALRRGVRYFTALQASDGHWPGEITGPLFFLPPLIFCLYITGHLEEVFDAEHRKEMLRHIYCHQNEDGGWGLHIESKSVMFCTVLNYICLRMLGENPEQDACKRARQWILDRGGVIFIPSWGKFWLSILGVYDWSGTNPTPPELLMLPSFLPIHPGKILCYSRMVSIPMSYLYGKRFVGPITPLILLLREELYLEPYEEINWKKSRRLYAKEDMYYAHPLVQDLLSDTLQNFVEPLLTRWPLNKLVREKALQLTMKHIHYEDENSHYITIGCVEKVLCMLACWVENPNGDYFKKHLARIPDYMWVAEDGMKMQSFGCQLWDTGFAIQALLASNLPDETDDALKRGHNYIKASQVRENPSGDFRSMYRHISKGAWTFSDRDHGWQVSDCTAEALKCCLLLSMMSADIVGQKIDDEQLYDSVNLLLSLQSGNGGVNAWEPSRAYKWLELLNPTEFMANTMVEREFVECTSSVIQALDLFRKLYPDHRKKEINRSIEKAVQFIQDNQTPDGSWYGNWGVCFIYATWFALGGLAAAGETYNDCLAMRNGVHFLLTTQRDDGGWGESYLSCSEQRYIPSEGERSNLVQTSWAMMALIHTGQAERDLIPLHRAAKLIINSQLENGDFPQQEIVGAFMNTCMLHYATYRNTFPLWALAEYRKVVFIVN</sequence>
<name>LUP1_ARATH</name>
<organism>
    <name type="scientific">Arabidopsis thaliana</name>
    <name type="common">Mouse-ear cress</name>
    <dbReference type="NCBI Taxonomy" id="3702"/>
    <lineage>
        <taxon>Eukaryota</taxon>
        <taxon>Viridiplantae</taxon>
        <taxon>Streptophyta</taxon>
        <taxon>Embryophyta</taxon>
        <taxon>Tracheophyta</taxon>
        <taxon>Spermatophyta</taxon>
        <taxon>Magnoliopsida</taxon>
        <taxon>eudicotyledons</taxon>
        <taxon>Gunneridae</taxon>
        <taxon>Pentapetalae</taxon>
        <taxon>rosids</taxon>
        <taxon>malvids</taxon>
        <taxon>Brassicales</taxon>
        <taxon>Brassicaceae</taxon>
        <taxon>Camelineae</taxon>
        <taxon>Arabidopsis</taxon>
    </lineage>
</organism>
<evidence type="ECO:0000250" key="1">
    <source>
        <dbReference type="UniProtKB" id="P48449"/>
    </source>
</evidence>
<evidence type="ECO:0000255" key="2"/>
<evidence type="ECO:0000269" key="3">
    <source>
    </source>
</evidence>
<evidence type="ECO:0000269" key="4">
    <source>
    </source>
</evidence>
<evidence type="ECO:0000269" key="5">
    <source>
    </source>
</evidence>
<evidence type="ECO:0000303" key="6">
    <source>
    </source>
</evidence>
<evidence type="ECO:0000303" key="7">
    <source>
    </source>
</evidence>
<evidence type="ECO:0000303" key="8">
    <source>
    </source>
</evidence>
<evidence type="ECO:0000305" key="9"/>
<evidence type="ECO:0000312" key="10">
    <source>
        <dbReference type="Araport" id="AT1G78970"/>
    </source>
</evidence>
<evidence type="ECO:0000312" key="11">
    <source>
        <dbReference type="EMBL" id="AAC17055.1"/>
    </source>
</evidence>
<comment type="function">
    <text evidence="3 4">Multifunctional enzyme that converts oxidosqualene to lupeol and 3,20-dihydroxylupane. Minor production of beta-amyrin, germanicol, taraxasterol and psi-taraxasterol.</text>
</comment>
<comment type="catalytic activity">
    <reaction evidence="3 4">
        <text>lupan-3beta,20-diol = (S)-2,3-epoxysqualene + H2O</text>
        <dbReference type="Rhea" id="RHEA:31351"/>
        <dbReference type="ChEBI" id="CHEBI:15377"/>
        <dbReference type="ChEBI" id="CHEBI:15441"/>
        <dbReference type="ChEBI" id="CHEBI:62735"/>
        <dbReference type="EC" id="4.2.1.128"/>
    </reaction>
</comment>
<comment type="catalytic activity">
    <reaction evidence="3 4 5">
        <text>(S)-2,3-epoxysqualene = lupeol</text>
        <dbReference type="Rhea" id="RHEA:31383"/>
        <dbReference type="ChEBI" id="CHEBI:6570"/>
        <dbReference type="ChEBI" id="CHEBI:15441"/>
        <dbReference type="EC" id="5.4.99.41"/>
    </reaction>
</comment>
<comment type="catalytic activity">
    <reaction evidence="3 4">
        <text>(S)-2,3-epoxysqualene = beta-amyrin</text>
        <dbReference type="Rhea" id="RHEA:31007"/>
        <dbReference type="ChEBI" id="CHEBI:10352"/>
        <dbReference type="ChEBI" id="CHEBI:15441"/>
        <dbReference type="EC" id="5.4.99.39"/>
    </reaction>
</comment>
<comment type="catalytic activity">
    <reaction evidence="3">
        <text>(S)-2,3-epoxysqualene = germanicol</text>
        <dbReference type="Rhea" id="RHEA:31003"/>
        <dbReference type="ChEBI" id="CHEBI:15441"/>
        <dbReference type="ChEBI" id="CHEBI:62455"/>
        <dbReference type="EC" id="5.4.99.34"/>
    </reaction>
</comment>
<comment type="similarity">
    <text evidence="9">Belongs to the terpene cyclase/mutase family.</text>
</comment>
<comment type="sequence caution" evidence="9">
    <conflict type="erroneous gene model prediction">
        <sequence resource="EMBL-CDS" id="AAC17055"/>
    </conflict>
</comment>
<feature type="chain" id="PRO_0000366131" description="Lupeol synthase 1">
    <location>
        <begin position="1"/>
        <end position="757"/>
    </location>
</feature>
<feature type="repeat" description="PFTB 1" evidence="2">
    <location>
        <begin position="149"/>
        <end position="190"/>
    </location>
</feature>
<feature type="repeat" description="PFTB 2" evidence="2">
    <location>
        <begin position="589"/>
        <end position="629"/>
    </location>
</feature>
<feature type="repeat" description="PFTB 3" evidence="2">
    <location>
        <begin position="638"/>
        <end position="679"/>
    </location>
</feature>
<feature type="active site" description="Proton donor" evidence="1">
    <location>
        <position position="483"/>
    </location>
</feature>
<feature type="sequence conflict" description="In Ref. 2; AAB94341." evidence="9" ref="2">
    <original>S</original>
    <variation>W</variation>
    <location>
        <position position="466"/>
    </location>
</feature>
<feature type="sequence conflict" description="In Ref. 1; AAD05032." evidence="9" ref="1">
    <original>V</original>
    <variation>G</variation>
    <location>
        <position position="503"/>
    </location>
</feature>
<feature type="sequence conflict" description="In Ref. 1; AAD05032." evidence="9" ref="1">
    <original>I</original>
    <variation>T</variation>
    <location>
        <position position="698"/>
    </location>
</feature>
<gene>
    <name evidence="7 8" type="primary">LUP1</name>
    <name evidence="10" type="ordered locus">At1g78970</name>
    <name evidence="11" type="ORF">YUP8H12R.28</name>
    <name evidence="11" type="ORF">YUP8H12R.42</name>
</gene>
<protein>
    <recommendedName>
        <fullName evidence="7 8">Lupeol synthase 1</fullName>
        <shortName evidence="7 8">AtLUP1</shortName>
        <ecNumber evidence="3 4 5">5.4.99.41</ecNumber>
    </recommendedName>
    <alternativeName>
        <fullName evidence="7 8">(S)-2,3-epoxysqualene synthase</fullName>
        <ecNumber evidence="3 4">4.2.1.128</ecNumber>
    </alternativeName>
    <alternativeName>
        <fullName evidence="7 8">Beta-amyrin synthase</fullName>
        <ecNumber evidence="3 4">5.4.99.39</ecNumber>
    </alternativeName>
    <alternativeName>
        <fullName evidence="6">Germanicol synthase</fullName>
        <ecNumber evidence="3">5.4.99.34</ecNumber>
    </alternativeName>
    <alternativeName>
        <fullName>Lupan-3-beta,20-diol synthase</fullName>
    </alternativeName>
</protein>
<reference key="1">
    <citation type="journal article" date="1998" name="Phytochemistry">
        <title>Cloning and characterization of the Arabidopsis thaliana lupeol synthase gene.</title>
        <authorList>
            <person name="Herrera J.B.R."/>
            <person name="Bartel B."/>
            <person name="Wilson W.K."/>
            <person name="Matsuda S.P.T."/>
        </authorList>
    </citation>
    <scope>NUCLEOTIDE SEQUENCE [MRNA]</scope>
    <source>
        <strain>cv. Landsberg erecta</strain>
    </source>
</reference>
<reference key="2">
    <citation type="journal article" date="2001" name="Plant Mol. Biol.">
        <title>Molecular cloning and expression in yeast of 2,3-oxidosqualene-triterpenoid cyclases from Arabidopsis thaliana.</title>
        <authorList>
            <person name="Husselstein-Muller T."/>
            <person name="Schaller H."/>
            <person name="Benveniste P."/>
        </authorList>
    </citation>
    <scope>NUCLEOTIDE SEQUENCE [MRNA]</scope>
    <scope>FUNCTION</scope>
    <scope>CATALYTIC ACTIVITY</scope>
    <scope>NOMENCLATURE</scope>
    <source>
        <strain>cv. Columbia</strain>
        <tissue>Hypocotyl</tissue>
    </source>
</reference>
<reference key="3">
    <citation type="journal article" date="2000" name="Nature">
        <title>Sequence and analysis of chromosome 1 of the plant Arabidopsis thaliana.</title>
        <authorList>
            <person name="Theologis A."/>
            <person name="Ecker J.R."/>
            <person name="Palm C.J."/>
            <person name="Federspiel N.A."/>
            <person name="Kaul S."/>
            <person name="White O."/>
            <person name="Alonso J."/>
            <person name="Altafi H."/>
            <person name="Araujo R."/>
            <person name="Bowman C.L."/>
            <person name="Brooks S.Y."/>
            <person name="Buehler E."/>
            <person name="Chan A."/>
            <person name="Chao Q."/>
            <person name="Chen H."/>
            <person name="Cheuk R.F."/>
            <person name="Chin C.W."/>
            <person name="Chung M.K."/>
            <person name="Conn L."/>
            <person name="Conway A.B."/>
            <person name="Conway A.R."/>
            <person name="Creasy T.H."/>
            <person name="Dewar K."/>
            <person name="Dunn P."/>
            <person name="Etgu P."/>
            <person name="Feldblyum T.V."/>
            <person name="Feng J.-D."/>
            <person name="Fong B."/>
            <person name="Fujii C.Y."/>
            <person name="Gill J.E."/>
            <person name="Goldsmith A.D."/>
            <person name="Haas B."/>
            <person name="Hansen N.F."/>
            <person name="Hughes B."/>
            <person name="Huizar L."/>
            <person name="Hunter J.L."/>
            <person name="Jenkins J."/>
            <person name="Johnson-Hopson C."/>
            <person name="Khan S."/>
            <person name="Khaykin E."/>
            <person name="Kim C.J."/>
            <person name="Koo H.L."/>
            <person name="Kremenetskaia I."/>
            <person name="Kurtz D.B."/>
            <person name="Kwan A."/>
            <person name="Lam B."/>
            <person name="Langin-Hooper S."/>
            <person name="Lee A."/>
            <person name="Lee J.M."/>
            <person name="Lenz C.A."/>
            <person name="Li J.H."/>
            <person name="Li Y.-P."/>
            <person name="Lin X."/>
            <person name="Liu S.X."/>
            <person name="Liu Z.A."/>
            <person name="Luros J.S."/>
            <person name="Maiti R."/>
            <person name="Marziali A."/>
            <person name="Militscher J."/>
            <person name="Miranda M."/>
            <person name="Nguyen M."/>
            <person name="Nierman W.C."/>
            <person name="Osborne B.I."/>
            <person name="Pai G."/>
            <person name="Peterson J."/>
            <person name="Pham P.K."/>
            <person name="Rizzo M."/>
            <person name="Rooney T."/>
            <person name="Rowley D."/>
            <person name="Sakano H."/>
            <person name="Salzberg S.L."/>
            <person name="Schwartz J.R."/>
            <person name="Shinn P."/>
            <person name="Southwick A.M."/>
            <person name="Sun H."/>
            <person name="Tallon L.J."/>
            <person name="Tambunga G."/>
            <person name="Toriumi M.J."/>
            <person name="Town C.D."/>
            <person name="Utterback T."/>
            <person name="Van Aken S."/>
            <person name="Vaysberg M."/>
            <person name="Vysotskaia V.S."/>
            <person name="Walker M."/>
            <person name="Wu D."/>
            <person name="Yu G."/>
            <person name="Fraser C.M."/>
            <person name="Venter J.C."/>
            <person name="Davis R.W."/>
        </authorList>
    </citation>
    <scope>NUCLEOTIDE SEQUENCE [LARGE SCALE GENOMIC DNA]</scope>
    <source>
        <strain>cv. Columbia</strain>
    </source>
</reference>
<reference key="4">
    <citation type="journal article" date="2017" name="Plant J.">
        <title>Araport11: a complete reannotation of the Arabidopsis thaliana reference genome.</title>
        <authorList>
            <person name="Cheng C.Y."/>
            <person name="Krishnakumar V."/>
            <person name="Chan A.P."/>
            <person name="Thibaud-Nissen F."/>
            <person name="Schobel S."/>
            <person name="Town C.D."/>
        </authorList>
    </citation>
    <scope>GENOME REANNOTATION</scope>
    <source>
        <strain>cv. Columbia</strain>
    </source>
</reference>
<reference key="5">
    <citation type="journal article" date="2003" name="Science">
        <title>Empirical analysis of transcriptional activity in the Arabidopsis genome.</title>
        <authorList>
            <person name="Yamada K."/>
            <person name="Lim J."/>
            <person name="Dale J.M."/>
            <person name="Chen H."/>
            <person name="Shinn P."/>
            <person name="Palm C.J."/>
            <person name="Southwick A.M."/>
            <person name="Wu H.C."/>
            <person name="Kim C.J."/>
            <person name="Nguyen M."/>
            <person name="Pham P.K."/>
            <person name="Cheuk R.F."/>
            <person name="Karlin-Newmann G."/>
            <person name="Liu S.X."/>
            <person name="Lam B."/>
            <person name="Sakano H."/>
            <person name="Wu T."/>
            <person name="Yu G."/>
            <person name="Miranda M."/>
            <person name="Quach H.L."/>
            <person name="Tripp M."/>
            <person name="Chang C.H."/>
            <person name="Lee J.M."/>
            <person name="Toriumi M.J."/>
            <person name="Chan M.M."/>
            <person name="Tang C.C."/>
            <person name="Onodera C.S."/>
            <person name="Deng J.M."/>
            <person name="Akiyama K."/>
            <person name="Ansari Y."/>
            <person name="Arakawa T."/>
            <person name="Banh J."/>
            <person name="Banno F."/>
            <person name="Bowser L."/>
            <person name="Brooks S.Y."/>
            <person name="Carninci P."/>
            <person name="Chao Q."/>
            <person name="Choy N."/>
            <person name="Enju A."/>
            <person name="Goldsmith A.D."/>
            <person name="Gurjal M."/>
            <person name="Hansen N.F."/>
            <person name="Hayashizaki Y."/>
            <person name="Johnson-Hopson C."/>
            <person name="Hsuan V.W."/>
            <person name="Iida K."/>
            <person name="Karnes M."/>
            <person name="Khan S."/>
            <person name="Koesema E."/>
            <person name="Ishida J."/>
            <person name="Jiang P.X."/>
            <person name="Jones T."/>
            <person name="Kawai J."/>
            <person name="Kamiya A."/>
            <person name="Meyers C."/>
            <person name="Nakajima M."/>
            <person name="Narusaka M."/>
            <person name="Seki M."/>
            <person name="Sakurai T."/>
            <person name="Satou M."/>
            <person name="Tamse R."/>
            <person name="Vaysberg M."/>
            <person name="Wallender E.K."/>
            <person name="Wong C."/>
            <person name="Yamamura Y."/>
            <person name="Yuan S."/>
            <person name="Shinozaki K."/>
            <person name="Davis R.W."/>
            <person name="Theologis A."/>
            <person name="Ecker J.R."/>
        </authorList>
    </citation>
    <scope>NUCLEOTIDE SEQUENCE [LARGE SCALE MRNA]</scope>
    <source>
        <strain>cv. Columbia</strain>
    </source>
</reference>
<reference key="6">
    <citation type="journal article" date="2000" name="Org. Lett.">
        <title>Arabidopsis thaliana LUP1 converts oxidosqualene to multiple triterpene alcohols and a triterpene diol.</title>
        <authorList>
            <person name="Segura M.J.R."/>
            <person name="Meyer M.M."/>
            <person name="Matsuda S.P.T."/>
        </authorList>
    </citation>
    <scope>FUNCTION</scope>
    <scope>CATALYTIC ACTIVITY</scope>
</reference>
<reference key="7">
    <citation type="journal article" date="2003" name="Pure Appl. Chem.">
        <title>Functional genomics approach to the study of triterpene biosynthesis.</title>
        <authorList>
            <person name="Ebizuka Y."/>
            <person name="Katsube Y."/>
            <person name="Tsutsumi T."/>
            <person name="Kushiro T."/>
            <person name="Shibuya M."/>
        </authorList>
    </citation>
    <scope>CHARACTERIZATION</scope>
</reference>
<reference key="8">
    <citation type="journal article" date="2006" name="Org. Lett.">
        <title>Stereochemical course in water addition during LUP1-catalyzed triterpene cyclization.</title>
        <authorList>
            <person name="Kushiro T."/>
            <person name="Hoshino M."/>
            <person name="Tsutsumi T."/>
            <person name="Kawai K."/>
            <person name="Shiro M."/>
            <person name="Shibuya M."/>
            <person name="Ebizuka Y."/>
        </authorList>
    </citation>
    <scope>CATALYTIC ACTIVITY</scope>
    <scope>REACTION MECHANISM</scope>
</reference>
<dbReference type="EC" id="5.4.99.41" evidence="3 4 5"/>
<dbReference type="EC" id="4.2.1.128" evidence="3 4"/>
<dbReference type="EC" id="5.4.99.39" evidence="3 4"/>
<dbReference type="EC" id="5.4.99.34" evidence="3"/>
<dbReference type="EMBL" id="U49919">
    <property type="protein sequence ID" value="AAD05032.1"/>
    <property type="molecule type" value="mRNA"/>
</dbReference>
<dbReference type="EMBL" id="U87266">
    <property type="protein sequence ID" value="AAB94341.1"/>
    <property type="molecule type" value="mRNA"/>
</dbReference>
<dbReference type="EMBL" id="AC002986">
    <property type="protein sequence ID" value="AAC17055.1"/>
    <property type="status" value="ALT_SEQ"/>
    <property type="molecule type" value="Genomic_DNA"/>
</dbReference>
<dbReference type="EMBL" id="CP002684">
    <property type="protein sequence ID" value="AEE36186.1"/>
    <property type="molecule type" value="Genomic_DNA"/>
</dbReference>
<dbReference type="EMBL" id="CP002684">
    <property type="protein sequence ID" value="AEE36187.1"/>
    <property type="molecule type" value="Genomic_DNA"/>
</dbReference>
<dbReference type="EMBL" id="CP002684">
    <property type="protein sequence ID" value="ANM58606.1"/>
    <property type="molecule type" value="Genomic_DNA"/>
</dbReference>
<dbReference type="EMBL" id="AF360147">
    <property type="protein sequence ID" value="AAK25857.1"/>
    <property type="molecule type" value="mRNA"/>
</dbReference>
<dbReference type="EMBL" id="AY052358">
    <property type="protein sequence ID" value="AAK96549.1"/>
    <property type="molecule type" value="mRNA"/>
</dbReference>
<dbReference type="EMBL" id="AY142678">
    <property type="protein sequence ID" value="AAN13216.1"/>
    <property type="molecule type" value="mRNA"/>
</dbReference>
<dbReference type="PIR" id="T01058">
    <property type="entry name" value="T01058"/>
</dbReference>
<dbReference type="RefSeq" id="NP_001321029.1">
    <property type="nucleotide sequence ID" value="NM_001334865.1"/>
</dbReference>
<dbReference type="RefSeq" id="NP_178018.1">
    <property type="nucleotide sequence ID" value="NM_106546.3"/>
</dbReference>
<dbReference type="RefSeq" id="NP_849903.1">
    <property type="nucleotide sequence ID" value="NM_179572.2"/>
</dbReference>
<dbReference type="SMR" id="Q9C5M3"/>
<dbReference type="BioGRID" id="29456">
    <property type="interactions" value="2"/>
</dbReference>
<dbReference type="FunCoup" id="Q9C5M3">
    <property type="interactions" value="777"/>
</dbReference>
<dbReference type="IntAct" id="Q9C5M3">
    <property type="interactions" value="1"/>
</dbReference>
<dbReference type="STRING" id="3702.Q9C5M3"/>
<dbReference type="GlyGen" id="Q9C5M3">
    <property type="glycosylation" value="1 site"/>
</dbReference>
<dbReference type="PaxDb" id="3702-AT1G78970.1"/>
<dbReference type="ProteomicsDB" id="238808"/>
<dbReference type="EnsemblPlants" id="AT1G78970.1">
    <property type="protein sequence ID" value="AT1G78970.1"/>
    <property type="gene ID" value="AT1G78970"/>
</dbReference>
<dbReference type="EnsemblPlants" id="AT1G78970.2">
    <property type="protein sequence ID" value="AT1G78970.2"/>
    <property type="gene ID" value="AT1G78970"/>
</dbReference>
<dbReference type="EnsemblPlants" id="AT1G78970.3">
    <property type="protein sequence ID" value="AT1G78970.3"/>
    <property type="gene ID" value="AT1G78970"/>
</dbReference>
<dbReference type="GeneID" id="844237"/>
<dbReference type="Gramene" id="AT1G78970.1">
    <property type="protein sequence ID" value="AT1G78970.1"/>
    <property type="gene ID" value="AT1G78970"/>
</dbReference>
<dbReference type="Gramene" id="AT1G78970.2">
    <property type="protein sequence ID" value="AT1G78970.2"/>
    <property type="gene ID" value="AT1G78970"/>
</dbReference>
<dbReference type="Gramene" id="AT1G78970.3">
    <property type="protein sequence ID" value="AT1G78970.3"/>
    <property type="gene ID" value="AT1G78970"/>
</dbReference>
<dbReference type="KEGG" id="ath:AT1G78970"/>
<dbReference type="Araport" id="AT1G78970"/>
<dbReference type="TAIR" id="AT1G78970">
    <property type="gene designation" value="LUP1"/>
</dbReference>
<dbReference type="eggNOG" id="KOG0497">
    <property type="taxonomic scope" value="Eukaryota"/>
</dbReference>
<dbReference type="HOGENOM" id="CLU_009074_2_1_1"/>
<dbReference type="InParanoid" id="Q9C5M3"/>
<dbReference type="OMA" id="EFMANTM"/>
<dbReference type="OrthoDB" id="1042786at2759"/>
<dbReference type="PhylomeDB" id="Q9C5M3"/>
<dbReference type="BioCyc" id="ARA:AT1G78970-MONOMER"/>
<dbReference type="BRENDA" id="4.2.1.128">
    <property type="organism ID" value="399"/>
</dbReference>
<dbReference type="BRENDA" id="5.4.99.41">
    <property type="organism ID" value="399"/>
</dbReference>
<dbReference type="PRO" id="PR:Q9C5M3"/>
<dbReference type="Proteomes" id="UP000006548">
    <property type="component" value="Chromosome 1"/>
</dbReference>
<dbReference type="ExpressionAtlas" id="Q9C5M3">
    <property type="expression patterns" value="baseline and differential"/>
</dbReference>
<dbReference type="GO" id="GO:0005811">
    <property type="term" value="C:lipid droplet"/>
    <property type="evidence" value="ECO:0007669"/>
    <property type="project" value="InterPro"/>
</dbReference>
<dbReference type="GO" id="GO:0042300">
    <property type="term" value="F:beta-amyrin synthase activity"/>
    <property type="evidence" value="ECO:0000314"/>
    <property type="project" value="TAIR"/>
</dbReference>
<dbReference type="GO" id="GO:0102245">
    <property type="term" value="F:lupan-3beta,20-diol synthase activity"/>
    <property type="evidence" value="ECO:0007669"/>
    <property type="project" value="UniProtKB-EC"/>
</dbReference>
<dbReference type="GO" id="GO:0042299">
    <property type="term" value="F:lupeol synthase activity"/>
    <property type="evidence" value="ECO:0000314"/>
    <property type="project" value="TAIR"/>
</dbReference>
<dbReference type="GO" id="GO:0016104">
    <property type="term" value="P:triterpenoid biosynthetic process"/>
    <property type="evidence" value="ECO:0007669"/>
    <property type="project" value="InterPro"/>
</dbReference>
<dbReference type="CDD" id="cd02892">
    <property type="entry name" value="SQCY_1"/>
    <property type="match status" value="1"/>
</dbReference>
<dbReference type="FunFam" id="1.50.10.20:FF:000044">
    <property type="entry name" value="Lupeol synthase"/>
    <property type="match status" value="1"/>
</dbReference>
<dbReference type="FunFam" id="1.50.10.20:FF:000011">
    <property type="entry name" value="Terpene cyclase/mutase family member"/>
    <property type="match status" value="1"/>
</dbReference>
<dbReference type="Gene3D" id="1.50.10.20">
    <property type="match status" value="2"/>
</dbReference>
<dbReference type="InterPro" id="IPR032696">
    <property type="entry name" value="SQ_cyclase_C"/>
</dbReference>
<dbReference type="InterPro" id="IPR032697">
    <property type="entry name" value="SQ_cyclase_N"/>
</dbReference>
<dbReference type="InterPro" id="IPR018333">
    <property type="entry name" value="Squalene_cyclase"/>
</dbReference>
<dbReference type="InterPro" id="IPR002365">
    <property type="entry name" value="Terpene_synthase_CS"/>
</dbReference>
<dbReference type="InterPro" id="IPR008930">
    <property type="entry name" value="Terpenoid_cyclase/PrenylTrfase"/>
</dbReference>
<dbReference type="NCBIfam" id="TIGR01787">
    <property type="entry name" value="squalene_cyclas"/>
    <property type="match status" value="1"/>
</dbReference>
<dbReference type="PANTHER" id="PTHR11764:SF87">
    <property type="entry name" value="LUPEOL SYNTHASE 1"/>
    <property type="match status" value="1"/>
</dbReference>
<dbReference type="PANTHER" id="PTHR11764">
    <property type="entry name" value="TERPENE CYCLASE/MUTASE FAMILY MEMBER"/>
    <property type="match status" value="1"/>
</dbReference>
<dbReference type="Pfam" id="PF13243">
    <property type="entry name" value="SQHop_cyclase_C"/>
    <property type="match status" value="1"/>
</dbReference>
<dbReference type="Pfam" id="PF13249">
    <property type="entry name" value="SQHop_cyclase_N"/>
    <property type="match status" value="1"/>
</dbReference>
<dbReference type="SFLD" id="SFLDG01016">
    <property type="entry name" value="Prenyltransferase_Like_2"/>
    <property type="match status" value="1"/>
</dbReference>
<dbReference type="SUPFAM" id="SSF48239">
    <property type="entry name" value="Terpenoid cyclases/Protein prenyltransferases"/>
    <property type="match status" value="2"/>
</dbReference>
<dbReference type="PROSITE" id="PS01074">
    <property type="entry name" value="TERPENE_SYNTHASES"/>
    <property type="match status" value="1"/>
</dbReference>
<accession>Q9C5M3</accession>
<accession>O49985</accession>
<accession>O64551</accession>
<accession>P92977</accession>
<keyword id="KW-0413">Isomerase</keyword>
<keyword id="KW-0456">Lyase</keyword>
<keyword id="KW-1185">Reference proteome</keyword>
<keyword id="KW-0677">Repeat</keyword>
<proteinExistence type="evidence at protein level"/>